<keyword id="KW-0903">Direct protein sequencing</keyword>
<keyword id="KW-0256">Endoplasmic reticulum</keyword>
<keyword id="KW-0274">FAD</keyword>
<keyword id="KW-0285">Flavoprotein</keyword>
<keyword id="KW-0472">Membrane</keyword>
<keyword id="KW-0492">Microsome</keyword>
<keyword id="KW-0503">Monooxygenase</keyword>
<keyword id="KW-0521">NADP</keyword>
<keyword id="KW-0560">Oxidoreductase</keyword>
<keyword id="KW-1185">Reference proteome</keyword>
<keyword id="KW-0812">Transmembrane</keyword>
<keyword id="KW-1133">Transmembrane helix</keyword>
<comment type="function">
    <text evidence="1">Essential hepatic enzyme that catalyzes the oxygenation of a wide variety of nitrogen- and sulfur-containing compounds including drugs as well as dietary compounds. Plays an important role in the metabolism of trimethylamine (TMA), via the production of trimethylamine N-oxide (TMAO) metabolite. TMA is generated by the action of gut microbiota using dietary precursors such as choline, choline containing compounds, betaine or L-carnitine. By regulating TMAO concentration, FMO3 directly impacts both platelet responsiveness and rate of thrombus formation.</text>
</comment>
<comment type="catalytic activity">
    <reaction evidence="1">
        <text>trimethylamine + NADPH + O2 = trimethylamine N-oxide + NADP(+) + H2O</text>
        <dbReference type="Rhea" id="RHEA:31979"/>
        <dbReference type="ChEBI" id="CHEBI:15377"/>
        <dbReference type="ChEBI" id="CHEBI:15379"/>
        <dbReference type="ChEBI" id="CHEBI:15724"/>
        <dbReference type="ChEBI" id="CHEBI:57783"/>
        <dbReference type="ChEBI" id="CHEBI:58349"/>
        <dbReference type="ChEBI" id="CHEBI:58389"/>
        <dbReference type="EC" id="1.14.13.148"/>
    </reaction>
    <physiologicalReaction direction="left-to-right" evidence="1">
        <dbReference type="Rhea" id="RHEA:31980"/>
    </physiologicalReaction>
</comment>
<comment type="catalytic activity">
    <reaction evidence="1">
        <text>N,N-dimethylaniline + NADPH + O2 + H(+) = N,N-dimethylaniline N-oxide + NADP(+) + H2O</text>
        <dbReference type="Rhea" id="RHEA:24468"/>
        <dbReference type="ChEBI" id="CHEBI:15377"/>
        <dbReference type="ChEBI" id="CHEBI:15378"/>
        <dbReference type="ChEBI" id="CHEBI:15379"/>
        <dbReference type="ChEBI" id="CHEBI:16269"/>
        <dbReference type="ChEBI" id="CHEBI:17735"/>
        <dbReference type="ChEBI" id="CHEBI:57783"/>
        <dbReference type="ChEBI" id="CHEBI:58349"/>
        <dbReference type="EC" id="1.14.13.8"/>
    </reaction>
    <physiologicalReaction direction="left-to-right" evidence="1">
        <dbReference type="Rhea" id="RHEA:24469"/>
    </physiologicalReaction>
</comment>
<comment type="catalytic activity">
    <reaction evidence="1">
        <text>hypotaurine + NADPH + O2 + H(+) = taurine + NADP(+) + H2O</text>
        <dbReference type="Rhea" id="RHEA:69819"/>
        <dbReference type="ChEBI" id="CHEBI:15377"/>
        <dbReference type="ChEBI" id="CHEBI:15378"/>
        <dbReference type="ChEBI" id="CHEBI:15379"/>
        <dbReference type="ChEBI" id="CHEBI:57783"/>
        <dbReference type="ChEBI" id="CHEBI:57853"/>
        <dbReference type="ChEBI" id="CHEBI:58349"/>
        <dbReference type="ChEBI" id="CHEBI:507393"/>
        <dbReference type="EC" id="1.14.13.8"/>
    </reaction>
    <physiologicalReaction direction="left-to-right" evidence="1">
        <dbReference type="Rhea" id="RHEA:69820"/>
    </physiologicalReaction>
</comment>
<comment type="catalytic activity">
    <reaction evidence="1">
        <text>(S)-nicotine + NADPH + O2 = trans-(S)-nicotine N(1')-oxide + NADP(+) + H2O</text>
        <dbReference type="Rhea" id="RHEA:58720"/>
        <dbReference type="ChEBI" id="CHEBI:15377"/>
        <dbReference type="ChEBI" id="CHEBI:15379"/>
        <dbReference type="ChEBI" id="CHEBI:57783"/>
        <dbReference type="ChEBI" id="CHEBI:58349"/>
        <dbReference type="ChEBI" id="CHEBI:59806"/>
        <dbReference type="ChEBI" id="CHEBI:142660"/>
    </reaction>
    <physiologicalReaction direction="left-to-right" evidence="1">
        <dbReference type="Rhea" id="RHEA:58721"/>
    </physiologicalReaction>
</comment>
<comment type="catalytic activity">
    <reaction evidence="1">
        <text>albendazole + NADPH + O2 + H(+) = albendazole S-oxide + NADP(+) + H2O</text>
        <dbReference type="Rhea" id="RHEA:10796"/>
        <dbReference type="ChEBI" id="CHEBI:15377"/>
        <dbReference type="ChEBI" id="CHEBI:15378"/>
        <dbReference type="ChEBI" id="CHEBI:15379"/>
        <dbReference type="ChEBI" id="CHEBI:16664"/>
        <dbReference type="ChEBI" id="CHEBI:16959"/>
        <dbReference type="ChEBI" id="CHEBI:57783"/>
        <dbReference type="ChEBI" id="CHEBI:58349"/>
        <dbReference type="EC" id="1.14.13.32"/>
    </reaction>
    <physiologicalReaction direction="left-to-right" evidence="1">
        <dbReference type="Rhea" id="RHEA:10797"/>
    </physiologicalReaction>
</comment>
<comment type="cofactor">
    <cofactor>
        <name>FAD</name>
        <dbReference type="ChEBI" id="CHEBI:57692"/>
    </cofactor>
</comment>
<comment type="subcellular location">
    <subcellularLocation>
        <location evidence="5 6">Microsome membrane</location>
        <topology evidence="3">Single-pass membrane protein</topology>
    </subcellularLocation>
    <subcellularLocation>
        <location evidence="9">Endoplasmic reticulum membrane</location>
        <topology evidence="3">Single-pass membrane protein</topology>
    </subcellularLocation>
</comment>
<comment type="tissue specificity">
    <text evidence="5">Liver.</text>
</comment>
<comment type="similarity">
    <text evidence="8">Belongs to the FMO family.</text>
</comment>
<gene>
    <name type="primary">FMO3</name>
</gene>
<organism>
    <name type="scientific">Oryctolagus cuniculus</name>
    <name type="common">Rabbit</name>
    <dbReference type="NCBI Taxonomy" id="9986"/>
    <lineage>
        <taxon>Eukaryota</taxon>
        <taxon>Metazoa</taxon>
        <taxon>Chordata</taxon>
        <taxon>Craniata</taxon>
        <taxon>Vertebrata</taxon>
        <taxon>Euteleostomi</taxon>
        <taxon>Mammalia</taxon>
        <taxon>Eutheria</taxon>
        <taxon>Euarchontoglires</taxon>
        <taxon>Glires</taxon>
        <taxon>Lagomorpha</taxon>
        <taxon>Leporidae</taxon>
        <taxon>Oryctolagus</taxon>
    </lineage>
</organism>
<reference key="1">
    <citation type="journal article" date="1994" name="J. Biol. Chem.">
        <title>Cloning and sequencing of flavin-containing monooxygenases FMO3 and FMO4 from rabbit and characterization of FMO3.</title>
        <authorList>
            <person name="Burnett V.L."/>
            <person name="Lawton M.P."/>
            <person name="Philpot R.M."/>
        </authorList>
    </citation>
    <scope>NUCLEOTIDE SEQUENCE [MRNA]</scope>
    <source>
        <strain>New Zealand white</strain>
        <tissue>Liver</tissue>
    </source>
</reference>
<reference key="2">
    <citation type="journal article" date="1991" name="Arch. Biochem. Biophys.">
        <title>Multiple forms of liver microsomal flavin-containing monooxygenases: complete covalent structure of form 2.</title>
        <authorList>
            <person name="Ozols J."/>
        </authorList>
    </citation>
    <scope>PROTEIN SEQUENCE OF 2-531</scope>
</reference>
<reference key="3">
    <citation type="journal article" date="1994" name="Biochemistry">
        <title>Isolation and structure of a third form of liver microsomal flavin monooxygenase.</title>
        <authorList>
            <person name="Ozols J."/>
        </authorList>
    </citation>
    <scope>PROTEIN SEQUENCE OF 2-531</scope>
    <scope>SUBCELLULAR LOCATION</scope>
    <source>
        <strain>New Zealand white</strain>
        <tissue>Liver</tissue>
    </source>
</reference>
<reference key="4">
    <citation type="journal article" date="1989" name="Biochem. Biophys. Res. Commun.">
        <title>Liver microsomes contain two distinct NADPH-Monooxygenases with NH2-terminal segments homologous to the flavin containing NADPH-monooxygenase of Pseudomonas fluorescens.</title>
        <authorList>
            <person name="Ozols J."/>
        </authorList>
    </citation>
    <scope>PROTEIN SEQUENCE OF 2-33</scope>
    <scope>TISSUE SPECIFICITY</scope>
    <scope>SUBCELLULAR LOCATION</scope>
    <source>
        <tissue>Liver</tissue>
    </source>
</reference>
<proteinExistence type="evidence at protein level"/>
<accession>P32417</accession>
<sequence>MGKKVAIIGAGISGLASIRSCLEEGLEPTCFEMSDDIGGLWKFSDHAEEGRASIYQSVFTNSSKEMMCFPDFPFPDDFPNFMHNSKLQEYITTFAREKNLLKYIQFKTLVSSIKKHPDFSVTGQWYVSTERNGKKETAVFDAVMICSGHHVYPNLPKDSFPGLKHFKGKSFHSREYKEPGIFKGKRVLVIGLGNSGCDIATELSHTAEQVVISSRSGSWVMSRVWDDGYPWDMLYVTRFQTFLKNNLPTAISDWWYVKQMNAKFKHENYSLMPLNGTLRKEPVFNDDLPARILCGTVSIKPNVKEFTETSAIFEDGTVFEAIDSVIFATGYGYAYPFLDDSIIKSENNKVTLFKGIFPPQLEKPTMAVIGLVQSLGAAIPTTDLQARWAAQVIKGTCTLPPVKDMMNDIHEKMGTKLKWFGKSETIQTDYINYMDELASFIGVKLNIPWLFLTDPRLALEVFFGPCSPYQFRLVGPGKWPGARQAILTQWDRSLKPMKTRAVGHLQKPALFSPWLKLLAIAVLLIAAVLVF</sequence>
<feature type="initiator methionine" description="Removed" evidence="4 5">
    <location>
        <position position="1"/>
    </location>
</feature>
<feature type="chain" id="PRO_0000147658" description="Flavin-containing monooxygenase 3">
    <location>
        <begin position="2"/>
        <end position="531"/>
    </location>
</feature>
<feature type="transmembrane region" description="Helical" evidence="3">
    <location>
        <begin position="511"/>
        <end position="531"/>
    </location>
</feature>
<feature type="binding site" evidence="2">
    <location>
        <begin position="9"/>
        <end position="13"/>
    </location>
    <ligand>
        <name>FAD</name>
        <dbReference type="ChEBI" id="CHEBI:57692"/>
    </ligand>
</feature>
<feature type="binding site" evidence="2">
    <location>
        <position position="32"/>
    </location>
    <ligand>
        <name>FAD</name>
        <dbReference type="ChEBI" id="CHEBI:57692"/>
    </ligand>
</feature>
<feature type="binding site" evidence="2">
    <location>
        <begin position="40"/>
        <end position="41"/>
    </location>
    <ligand>
        <name>FAD</name>
        <dbReference type="ChEBI" id="CHEBI:57692"/>
    </ligand>
</feature>
<feature type="binding site" evidence="2">
    <location>
        <begin position="60"/>
        <end position="61"/>
    </location>
    <ligand>
        <name>NADP(+)</name>
        <dbReference type="ChEBI" id="CHEBI:58349"/>
    </ligand>
</feature>
<feature type="binding site" evidence="2">
    <location>
        <begin position="61"/>
        <end position="62"/>
    </location>
    <ligand>
        <name>FAD</name>
        <dbReference type="ChEBI" id="CHEBI:57692"/>
    </ligand>
</feature>
<feature type="binding site" evidence="2">
    <location>
        <begin position="195"/>
        <end position="198"/>
    </location>
    <ligand>
        <name>NADP(+)</name>
        <dbReference type="ChEBI" id="CHEBI:58349"/>
    </ligand>
</feature>
<feature type="sequence variant">
    <original>R</original>
    <variation>M</variation>
    <location>
        <position position="279"/>
    </location>
</feature>
<feature type="sequence variant">
    <original>M</original>
    <variation>V</variation>
    <location>
        <position position="405"/>
    </location>
</feature>
<feature type="sequence conflict" description="In Ref. 2; AA sequence." evidence="8" ref="2">
    <original>D</original>
    <variation>P</variation>
    <location>
        <position position="76"/>
    </location>
</feature>
<feature type="sequence conflict" description="In Ref. 2; AA sequence." evidence="8" ref="2">
    <original>F</original>
    <variation>N</variation>
    <location>
        <position position="81"/>
    </location>
</feature>
<feature type="sequence conflict" description="In Ref. 2; AA sequence." evidence="8" ref="2">
    <original>STE</original>
    <variation>ATC</variation>
    <location>
        <begin position="128"/>
        <end position="130"/>
    </location>
</feature>
<feature type="sequence conflict" description="In Ref. 2; AA sequence." evidence="8" ref="2">
    <original>HS</original>
    <variation>RQ</variation>
    <location>
        <begin position="172"/>
        <end position="173"/>
    </location>
</feature>
<feature type="sequence conflict" description="In Ref. 2; AA sequence." evidence="8" ref="2">
    <original>C</original>
    <variation>E</variation>
    <location>
        <position position="197"/>
    </location>
</feature>
<feature type="sequence conflict" description="In Ref. 2; AA sequence." evidence="8" ref="2">
    <original>F</original>
    <variation>FKEF</variation>
    <location>
        <position position="306"/>
    </location>
</feature>
<feature type="sequence conflict" description="In Ref. 2; AA sequence." evidence="8" ref="2">
    <original>W</original>
    <variation>T</variation>
    <location>
        <position position="419"/>
    </location>
</feature>
<feature type="sequence conflict" description="In Ref. 2; AA sequence." evidence="8" ref="2">
    <original>S</original>
    <variation>W</variation>
    <location>
        <position position="423"/>
    </location>
</feature>
<feature type="sequence conflict" description="In Ref. 2; AA sequence." evidence="8" ref="2">
    <original>WLK</original>
    <variation>ELW</variation>
    <location>
        <begin position="514"/>
        <end position="516"/>
    </location>
</feature>
<name>FMO3_RABIT</name>
<evidence type="ECO:0000250" key="1">
    <source>
        <dbReference type="UniProtKB" id="P31513"/>
    </source>
</evidence>
<evidence type="ECO:0000250" key="2">
    <source>
        <dbReference type="UniProtKB" id="Q9HFE4"/>
    </source>
</evidence>
<evidence type="ECO:0000255" key="3"/>
<evidence type="ECO:0000269" key="4">
    <source>
    </source>
</evidence>
<evidence type="ECO:0000269" key="5">
    <source>
    </source>
</evidence>
<evidence type="ECO:0000269" key="6">
    <source>
    </source>
</evidence>
<evidence type="ECO:0000303" key="7">
    <source>
    </source>
</evidence>
<evidence type="ECO:0000305" key="8"/>
<evidence type="ECO:0000305" key="9">
    <source>
    </source>
</evidence>
<dbReference type="EC" id="1.14.13.148" evidence="1"/>
<dbReference type="EC" id="1.14.13.32" evidence="1"/>
<dbReference type="EC" id="1.14.13.8" evidence="1"/>
<dbReference type="EMBL" id="L10391">
    <property type="protein sequence ID" value="AAA21178.1"/>
    <property type="molecule type" value="mRNA"/>
</dbReference>
<dbReference type="PIR" id="B54096">
    <property type="entry name" value="B54096"/>
</dbReference>
<dbReference type="PIR" id="S18380">
    <property type="entry name" value="S18380"/>
</dbReference>
<dbReference type="RefSeq" id="NP_001075715.1">
    <property type="nucleotide sequence ID" value="NM_001082246.1"/>
</dbReference>
<dbReference type="RefSeq" id="XP_008262186.1">
    <property type="nucleotide sequence ID" value="XM_008263964.4"/>
</dbReference>
<dbReference type="SMR" id="P32417"/>
<dbReference type="FunCoup" id="P32417">
    <property type="interactions" value="387"/>
</dbReference>
<dbReference type="STRING" id="9986.ENSOCUP00000003129"/>
<dbReference type="PaxDb" id="9986-ENSOCUP00000026249"/>
<dbReference type="Ensembl" id="ENSOCUT00000003608.2">
    <property type="protein sequence ID" value="ENSOCUP00000003129.2"/>
    <property type="gene ID" value="ENSOCUG00000003610.4"/>
</dbReference>
<dbReference type="GeneID" id="100009065"/>
<dbReference type="KEGG" id="ocu:100009065"/>
<dbReference type="CTD" id="2328"/>
<dbReference type="eggNOG" id="KOG1399">
    <property type="taxonomic scope" value="Eukaryota"/>
</dbReference>
<dbReference type="GeneTree" id="ENSGT00940000161339"/>
<dbReference type="HOGENOM" id="CLU_006909_8_2_1"/>
<dbReference type="InParanoid" id="P32417"/>
<dbReference type="OrthoDB" id="66881at2759"/>
<dbReference type="TreeFam" id="TF105285"/>
<dbReference type="BRENDA" id="1.14.13.148">
    <property type="organism ID" value="1749"/>
</dbReference>
<dbReference type="Proteomes" id="UP000001811">
    <property type="component" value="Chromosome 13"/>
</dbReference>
<dbReference type="Bgee" id="ENSOCUG00000003610">
    <property type="expression patterns" value="Expressed in liver and 12 other cell types or tissues"/>
</dbReference>
<dbReference type="GO" id="GO:0005789">
    <property type="term" value="C:endoplasmic reticulum membrane"/>
    <property type="evidence" value="ECO:0007669"/>
    <property type="project" value="UniProtKB-SubCell"/>
</dbReference>
<dbReference type="GO" id="GO:0047638">
    <property type="term" value="F:albendazole monooxygenase activity"/>
    <property type="evidence" value="ECO:0007669"/>
    <property type="project" value="RHEA"/>
</dbReference>
<dbReference type="GO" id="GO:0050660">
    <property type="term" value="F:flavin adenine dinucleotide binding"/>
    <property type="evidence" value="ECO:0007669"/>
    <property type="project" value="InterPro"/>
</dbReference>
<dbReference type="GO" id="GO:0047822">
    <property type="term" value="F:hypotaurine monooxygenase activity"/>
    <property type="evidence" value="ECO:0007669"/>
    <property type="project" value="Ensembl"/>
</dbReference>
<dbReference type="GO" id="GO:0004499">
    <property type="term" value="F:N,N-dimethylaniline monooxygenase activity"/>
    <property type="evidence" value="ECO:0007669"/>
    <property type="project" value="InterPro"/>
</dbReference>
<dbReference type="GO" id="GO:0050661">
    <property type="term" value="F:NADP binding"/>
    <property type="evidence" value="ECO:0007669"/>
    <property type="project" value="InterPro"/>
</dbReference>
<dbReference type="GO" id="GO:0034899">
    <property type="term" value="F:trimethylamine monooxygenase activity"/>
    <property type="evidence" value="ECO:0007669"/>
    <property type="project" value="UniProtKB-EC"/>
</dbReference>
<dbReference type="GO" id="GO:0042412">
    <property type="term" value="P:taurine biosynthetic process"/>
    <property type="evidence" value="ECO:0007669"/>
    <property type="project" value="Ensembl"/>
</dbReference>
<dbReference type="FunFam" id="3.50.50.60:FF:000023">
    <property type="entry name" value="Dimethylaniline monooxygenase [N-oxide-forming]"/>
    <property type="match status" value="1"/>
</dbReference>
<dbReference type="FunFam" id="3.50.50.60:FF:000073">
    <property type="entry name" value="Dimethylaniline monooxygenase [N-oxide-forming]"/>
    <property type="match status" value="1"/>
</dbReference>
<dbReference type="FunFam" id="3.50.50.60:FF:000279">
    <property type="entry name" value="Dimethylaniline monooxygenase [N-oxide-forming]"/>
    <property type="match status" value="1"/>
</dbReference>
<dbReference type="FunFam" id="3.50.50.60:FF:000454">
    <property type="entry name" value="Dimethylaniline monooxygenase [N-oxide-forming]"/>
    <property type="match status" value="1"/>
</dbReference>
<dbReference type="Gene3D" id="3.50.50.60">
    <property type="entry name" value="FAD/NAD(P)-binding domain"/>
    <property type="match status" value="4"/>
</dbReference>
<dbReference type="InterPro" id="IPR036188">
    <property type="entry name" value="FAD/NAD-bd_sf"/>
</dbReference>
<dbReference type="InterPro" id="IPR000960">
    <property type="entry name" value="Flavin_mOase"/>
</dbReference>
<dbReference type="InterPro" id="IPR020946">
    <property type="entry name" value="Flavin_mOase-like"/>
</dbReference>
<dbReference type="InterPro" id="IPR002255">
    <property type="entry name" value="Flavin_mOase_3"/>
</dbReference>
<dbReference type="InterPro" id="IPR050346">
    <property type="entry name" value="FMO-like"/>
</dbReference>
<dbReference type="PANTHER" id="PTHR23023">
    <property type="entry name" value="DIMETHYLANILINE MONOOXYGENASE"/>
    <property type="match status" value="1"/>
</dbReference>
<dbReference type="Pfam" id="PF00743">
    <property type="entry name" value="FMO-like"/>
    <property type="match status" value="1"/>
</dbReference>
<dbReference type="PIRSF" id="PIRSF000332">
    <property type="entry name" value="FMO"/>
    <property type="match status" value="1"/>
</dbReference>
<dbReference type="PRINTS" id="PR00370">
    <property type="entry name" value="FMOXYGENASE"/>
</dbReference>
<dbReference type="PRINTS" id="PR01123">
    <property type="entry name" value="FMOXYGENASE3"/>
</dbReference>
<dbReference type="SUPFAM" id="SSF51905">
    <property type="entry name" value="FAD/NAD(P)-binding domain"/>
    <property type="match status" value="2"/>
</dbReference>
<protein>
    <recommendedName>
        <fullName evidence="1">Flavin-containing monooxygenase 3</fullName>
        <ecNumber evidence="1">1.14.13.148</ecNumber>
        <ecNumber evidence="1">1.14.13.32</ecNumber>
        <ecNumber evidence="1">1.14.13.8</ecNumber>
    </recommendedName>
    <alternativeName>
        <fullName>Dimethylaniline monooxygenase [N-oxide-forming] 3</fullName>
    </alternativeName>
    <alternativeName>
        <fullName>Dimethylaniline oxidase 3</fullName>
    </alternativeName>
    <alternativeName>
        <fullName>FMO 1D1</fullName>
    </alternativeName>
    <alternativeName>
        <fullName>FMO II</fullName>
    </alternativeName>
    <alternativeName>
        <fullName evidence="7">FMO form 2</fullName>
    </alternativeName>
    <alternativeName>
        <fullName>Hepatic flavin-containing monooxygenase 3</fullName>
        <shortName>FMO 3</shortName>
    </alternativeName>
    <alternativeName>
        <fullName>Trimethylamine monooxygenase</fullName>
    </alternativeName>
</protein>